<keyword id="KW-0687">Ribonucleoprotein</keyword>
<keyword id="KW-0689">Ribosomal protein</keyword>
<accession>B0T562</accession>
<evidence type="ECO:0000255" key="1">
    <source>
        <dbReference type="HAMAP-Rule" id="MF_00385"/>
    </source>
</evidence>
<evidence type="ECO:0000256" key="2">
    <source>
        <dbReference type="SAM" id="MobiDB-lite"/>
    </source>
</evidence>
<evidence type="ECO:0000305" key="3"/>
<reference key="1">
    <citation type="submission" date="2008-01" db="EMBL/GenBank/DDBJ databases">
        <title>Complete sequence of chromosome of Caulobacter sp. K31.</title>
        <authorList>
            <consortium name="US DOE Joint Genome Institute"/>
            <person name="Copeland A."/>
            <person name="Lucas S."/>
            <person name="Lapidus A."/>
            <person name="Barry K."/>
            <person name="Glavina del Rio T."/>
            <person name="Dalin E."/>
            <person name="Tice H."/>
            <person name="Pitluck S."/>
            <person name="Bruce D."/>
            <person name="Goodwin L."/>
            <person name="Thompson L.S."/>
            <person name="Brettin T."/>
            <person name="Detter J.C."/>
            <person name="Han C."/>
            <person name="Schmutz J."/>
            <person name="Larimer F."/>
            <person name="Land M."/>
            <person name="Hauser L."/>
            <person name="Kyrpides N."/>
            <person name="Kim E."/>
            <person name="Stephens C."/>
            <person name="Richardson P."/>
        </authorList>
    </citation>
    <scope>NUCLEOTIDE SEQUENCE [LARGE SCALE GENOMIC DNA]</scope>
    <source>
        <strain>K31</strain>
    </source>
</reference>
<sequence length="185" mass="19389">MLKIRLARGGAKKRPYYSIVVADSHSPRDGRFIEKVGTYNPLLKKDDAARVTLKVESIQAWLAKGAQPTDRVARFLAAQGLVQWTHGNNPEKAKPGKKAQERDAERTQRDADRVAAEAQAKEDAKAAAAEAAEAAAAAAAEAAAAPAPEPEVVAEEAPVEAAAEEAPAAEAAAEEAPASEETTEG</sequence>
<organism>
    <name type="scientific">Caulobacter sp. (strain K31)</name>
    <dbReference type="NCBI Taxonomy" id="366602"/>
    <lineage>
        <taxon>Bacteria</taxon>
        <taxon>Pseudomonadati</taxon>
        <taxon>Pseudomonadota</taxon>
        <taxon>Alphaproteobacteria</taxon>
        <taxon>Caulobacterales</taxon>
        <taxon>Caulobacteraceae</taxon>
        <taxon>Caulobacter</taxon>
    </lineage>
</organism>
<gene>
    <name evidence="1" type="primary">rpsP</name>
    <name type="ordered locus">Caul_4888</name>
</gene>
<comment type="similarity">
    <text evidence="1">Belongs to the bacterial ribosomal protein bS16 family.</text>
</comment>
<dbReference type="EMBL" id="CP000927">
    <property type="protein sequence ID" value="ABZ74008.1"/>
    <property type="molecule type" value="Genomic_DNA"/>
</dbReference>
<dbReference type="SMR" id="B0T562"/>
<dbReference type="STRING" id="366602.Caul_4888"/>
<dbReference type="KEGG" id="cak:Caul_4888"/>
<dbReference type="eggNOG" id="COG0228">
    <property type="taxonomic scope" value="Bacteria"/>
</dbReference>
<dbReference type="HOGENOM" id="CLU_100590_3_0_5"/>
<dbReference type="OrthoDB" id="9807878at2"/>
<dbReference type="GO" id="GO:0005737">
    <property type="term" value="C:cytoplasm"/>
    <property type="evidence" value="ECO:0007669"/>
    <property type="project" value="UniProtKB-ARBA"/>
</dbReference>
<dbReference type="GO" id="GO:0015935">
    <property type="term" value="C:small ribosomal subunit"/>
    <property type="evidence" value="ECO:0007669"/>
    <property type="project" value="TreeGrafter"/>
</dbReference>
<dbReference type="GO" id="GO:0003735">
    <property type="term" value="F:structural constituent of ribosome"/>
    <property type="evidence" value="ECO:0007669"/>
    <property type="project" value="InterPro"/>
</dbReference>
<dbReference type="GO" id="GO:0006412">
    <property type="term" value="P:translation"/>
    <property type="evidence" value="ECO:0007669"/>
    <property type="project" value="UniProtKB-UniRule"/>
</dbReference>
<dbReference type="Gene3D" id="3.30.1320.10">
    <property type="match status" value="1"/>
</dbReference>
<dbReference type="HAMAP" id="MF_00385">
    <property type="entry name" value="Ribosomal_bS16"/>
    <property type="match status" value="1"/>
</dbReference>
<dbReference type="InterPro" id="IPR000307">
    <property type="entry name" value="Ribosomal_bS16"/>
</dbReference>
<dbReference type="InterPro" id="IPR020592">
    <property type="entry name" value="Ribosomal_bS16_CS"/>
</dbReference>
<dbReference type="InterPro" id="IPR023803">
    <property type="entry name" value="Ribosomal_bS16_dom_sf"/>
</dbReference>
<dbReference type="NCBIfam" id="TIGR00002">
    <property type="entry name" value="S16"/>
    <property type="match status" value="1"/>
</dbReference>
<dbReference type="PANTHER" id="PTHR12919">
    <property type="entry name" value="30S RIBOSOMAL PROTEIN S16"/>
    <property type="match status" value="1"/>
</dbReference>
<dbReference type="PANTHER" id="PTHR12919:SF20">
    <property type="entry name" value="SMALL RIBOSOMAL SUBUNIT PROTEIN BS16M"/>
    <property type="match status" value="1"/>
</dbReference>
<dbReference type="Pfam" id="PF00886">
    <property type="entry name" value="Ribosomal_S16"/>
    <property type="match status" value="1"/>
</dbReference>
<dbReference type="SUPFAM" id="SSF54565">
    <property type="entry name" value="Ribosomal protein S16"/>
    <property type="match status" value="1"/>
</dbReference>
<dbReference type="PROSITE" id="PS00732">
    <property type="entry name" value="RIBOSOMAL_S16"/>
    <property type="match status" value="1"/>
</dbReference>
<proteinExistence type="inferred from homology"/>
<feature type="chain" id="PRO_1000080139" description="Small ribosomal subunit protein bS16">
    <location>
        <begin position="1"/>
        <end position="185"/>
    </location>
</feature>
<feature type="region of interest" description="Disordered" evidence="2">
    <location>
        <begin position="83"/>
        <end position="185"/>
    </location>
</feature>
<feature type="compositionally biased region" description="Basic and acidic residues" evidence="2">
    <location>
        <begin position="89"/>
        <end position="125"/>
    </location>
</feature>
<feature type="compositionally biased region" description="Low complexity" evidence="2">
    <location>
        <begin position="126"/>
        <end position="146"/>
    </location>
</feature>
<feature type="compositionally biased region" description="Low complexity" evidence="2">
    <location>
        <begin position="159"/>
        <end position="176"/>
    </location>
</feature>
<name>RS16_CAUSK</name>
<protein>
    <recommendedName>
        <fullName evidence="1">Small ribosomal subunit protein bS16</fullName>
    </recommendedName>
    <alternativeName>
        <fullName evidence="3">30S ribosomal protein S16</fullName>
    </alternativeName>
</protein>